<organism>
    <name type="scientific">Nostoc punctiforme (strain ATCC 29133 / PCC 73102)</name>
    <dbReference type="NCBI Taxonomy" id="63737"/>
    <lineage>
        <taxon>Bacteria</taxon>
        <taxon>Bacillati</taxon>
        <taxon>Cyanobacteriota</taxon>
        <taxon>Cyanophyceae</taxon>
        <taxon>Nostocales</taxon>
        <taxon>Nostocaceae</taxon>
        <taxon>Nostoc</taxon>
    </lineage>
</organism>
<feature type="chain" id="PRO_1000200365" description="tRNA uridine(34) hydroxylase">
    <location>
        <begin position="1"/>
        <end position="305"/>
    </location>
</feature>
<feature type="domain" description="Rhodanese" evidence="1">
    <location>
        <begin position="126"/>
        <end position="220"/>
    </location>
</feature>
<feature type="active site" description="Cysteine persulfide intermediate" evidence="1">
    <location>
        <position position="180"/>
    </location>
</feature>
<comment type="function">
    <text evidence="1">Catalyzes oxygen-dependent 5-hydroxyuridine (ho5U) modification at position 34 in tRNAs.</text>
</comment>
<comment type="catalytic activity">
    <reaction evidence="1">
        <text>uridine(34) in tRNA + AH2 + O2 = 5-hydroxyuridine(34) in tRNA + A + H2O</text>
        <dbReference type="Rhea" id="RHEA:64224"/>
        <dbReference type="Rhea" id="RHEA-COMP:11727"/>
        <dbReference type="Rhea" id="RHEA-COMP:13381"/>
        <dbReference type="ChEBI" id="CHEBI:13193"/>
        <dbReference type="ChEBI" id="CHEBI:15377"/>
        <dbReference type="ChEBI" id="CHEBI:15379"/>
        <dbReference type="ChEBI" id="CHEBI:17499"/>
        <dbReference type="ChEBI" id="CHEBI:65315"/>
        <dbReference type="ChEBI" id="CHEBI:136877"/>
    </reaction>
</comment>
<comment type="similarity">
    <text evidence="1">Belongs to the TrhO family.</text>
</comment>
<dbReference type="EC" id="1.14.-.-" evidence="1"/>
<dbReference type="EMBL" id="CP001037">
    <property type="protein sequence ID" value="ACC84438.1"/>
    <property type="molecule type" value="Genomic_DNA"/>
</dbReference>
<dbReference type="RefSeq" id="WP_012412378.1">
    <property type="nucleotide sequence ID" value="NC_010628.1"/>
</dbReference>
<dbReference type="SMR" id="B2IVX7"/>
<dbReference type="EnsemblBacteria" id="ACC84438">
    <property type="protein sequence ID" value="ACC84438"/>
    <property type="gene ID" value="Npun_F6152"/>
</dbReference>
<dbReference type="KEGG" id="npu:Npun_F6152"/>
<dbReference type="eggNOG" id="COG1054">
    <property type="taxonomic scope" value="Bacteria"/>
</dbReference>
<dbReference type="HOGENOM" id="CLU_038878_0_0_3"/>
<dbReference type="OrthoDB" id="9778326at2"/>
<dbReference type="PhylomeDB" id="B2IVX7"/>
<dbReference type="Proteomes" id="UP000001191">
    <property type="component" value="Chromosome"/>
</dbReference>
<dbReference type="GO" id="GO:0016705">
    <property type="term" value="F:oxidoreductase activity, acting on paired donors, with incorporation or reduction of molecular oxygen"/>
    <property type="evidence" value="ECO:0007669"/>
    <property type="project" value="UniProtKB-UniRule"/>
</dbReference>
<dbReference type="GO" id="GO:0006400">
    <property type="term" value="P:tRNA modification"/>
    <property type="evidence" value="ECO:0007669"/>
    <property type="project" value="UniProtKB-UniRule"/>
</dbReference>
<dbReference type="CDD" id="cd01518">
    <property type="entry name" value="RHOD_YceA"/>
    <property type="match status" value="1"/>
</dbReference>
<dbReference type="Gene3D" id="3.30.70.100">
    <property type="match status" value="1"/>
</dbReference>
<dbReference type="Gene3D" id="3.40.250.10">
    <property type="entry name" value="Rhodanese-like domain"/>
    <property type="match status" value="1"/>
</dbReference>
<dbReference type="HAMAP" id="MF_00469">
    <property type="entry name" value="TrhO"/>
    <property type="match status" value="1"/>
</dbReference>
<dbReference type="InterPro" id="IPR001763">
    <property type="entry name" value="Rhodanese-like_dom"/>
</dbReference>
<dbReference type="InterPro" id="IPR036873">
    <property type="entry name" value="Rhodanese-like_dom_sf"/>
</dbReference>
<dbReference type="InterPro" id="IPR020936">
    <property type="entry name" value="TrhO"/>
</dbReference>
<dbReference type="InterPro" id="IPR040503">
    <property type="entry name" value="TRHO_N"/>
</dbReference>
<dbReference type="NCBIfam" id="NF001136">
    <property type="entry name" value="PRK00142.1-4"/>
    <property type="match status" value="1"/>
</dbReference>
<dbReference type="PANTHER" id="PTHR43268:SF3">
    <property type="entry name" value="RHODANESE-LIKE DOMAIN-CONTAINING PROTEIN 7-RELATED"/>
    <property type="match status" value="1"/>
</dbReference>
<dbReference type="PANTHER" id="PTHR43268">
    <property type="entry name" value="THIOSULFATE SULFURTRANSFERASE/RHODANESE-LIKE DOMAIN-CONTAINING PROTEIN 2"/>
    <property type="match status" value="1"/>
</dbReference>
<dbReference type="Pfam" id="PF00581">
    <property type="entry name" value="Rhodanese"/>
    <property type="match status" value="1"/>
</dbReference>
<dbReference type="Pfam" id="PF17773">
    <property type="entry name" value="UPF0176_N"/>
    <property type="match status" value="1"/>
</dbReference>
<dbReference type="SMART" id="SM00450">
    <property type="entry name" value="RHOD"/>
    <property type="match status" value="1"/>
</dbReference>
<dbReference type="SUPFAM" id="SSF52821">
    <property type="entry name" value="Rhodanese/Cell cycle control phosphatase"/>
    <property type="match status" value="1"/>
</dbReference>
<dbReference type="PROSITE" id="PS50206">
    <property type="entry name" value="RHODANESE_3"/>
    <property type="match status" value="1"/>
</dbReference>
<sequence length="305" mass="34606">MNSENTQIVAALYKFVKLPDFAQKRDPLLSYCQAQGVKGTILLAQEGINGTIAGSRQAIDSVLWFLRSDPRLADLEYKESYTETPPFERMKVRLKSEIVTLGLPEIDPTEKVGTYVSPQEWNDLICDPEVTVIDTRNDYEVNIGTFQGAENPQTGSFREFPDYVVHNLDPTKHKKVALFCTGGIRCEKASSFMLAQGFAEVYHLKGGILKYLEEVPAQESLWQGECFVFDERVAVSHGLEEGSYELCFCCGYPISEEDKISPKYEQGISCAYCFDSLTEEKRARQQEKWRHYQTQVANSKNRDVS</sequence>
<evidence type="ECO:0000255" key="1">
    <source>
        <dbReference type="HAMAP-Rule" id="MF_00469"/>
    </source>
</evidence>
<reference key="1">
    <citation type="journal article" date="2013" name="Plant Physiol.">
        <title>A Nostoc punctiforme Sugar Transporter Necessary to Establish a Cyanobacterium-Plant Symbiosis.</title>
        <authorList>
            <person name="Ekman M."/>
            <person name="Picossi S."/>
            <person name="Campbell E.L."/>
            <person name="Meeks J.C."/>
            <person name="Flores E."/>
        </authorList>
    </citation>
    <scope>NUCLEOTIDE SEQUENCE [LARGE SCALE GENOMIC DNA]</scope>
    <source>
        <strain>ATCC 29133 / PCC 73102</strain>
    </source>
</reference>
<protein>
    <recommendedName>
        <fullName evidence="1">tRNA uridine(34) hydroxylase</fullName>
        <ecNumber evidence="1">1.14.-.-</ecNumber>
    </recommendedName>
    <alternativeName>
        <fullName evidence="1">tRNA hydroxylation protein O</fullName>
    </alternativeName>
</protein>
<gene>
    <name evidence="1" type="primary">trhO</name>
    <name type="ordered locus">Npun_F6152</name>
</gene>
<keyword id="KW-0560">Oxidoreductase</keyword>
<keyword id="KW-1185">Reference proteome</keyword>
<keyword id="KW-0819">tRNA processing</keyword>
<accession>B2IVX7</accession>
<proteinExistence type="inferred from homology"/>
<name>TRHO_NOSP7</name>